<dbReference type="EMBL" id="AF177396">
    <property type="protein sequence ID" value="AAF02676.1"/>
    <property type="molecule type" value="mRNA"/>
</dbReference>
<dbReference type="EMBL" id="AB034203">
    <property type="protein sequence ID" value="BAA90548.1"/>
    <property type="molecule type" value="mRNA"/>
</dbReference>
<dbReference type="EMBL" id="AB057591">
    <property type="protein sequence ID" value="BAB84360.1"/>
    <property type="molecule type" value="mRNA"/>
</dbReference>
<dbReference type="EMBL" id="AB057804">
    <property type="protein sequence ID" value="BAB84361.1"/>
    <property type="molecule type" value="Genomic_DNA"/>
</dbReference>
<dbReference type="EMBL" id="AB033421">
    <property type="protein sequence ID" value="BAA85488.1"/>
    <property type="molecule type" value="mRNA"/>
</dbReference>
<dbReference type="EMBL" id="AB035182">
    <property type="protein sequence ID" value="BAA87044.2"/>
    <property type="molecule type" value="Genomic_DNA"/>
</dbReference>
<dbReference type="EMBL" id="AY358378">
    <property type="protein sequence ID" value="AAQ88744.1"/>
    <property type="molecule type" value="mRNA"/>
</dbReference>
<dbReference type="EMBL" id="AK289897">
    <property type="protein sequence ID" value="BAF82586.1"/>
    <property type="molecule type" value="mRNA"/>
</dbReference>
<dbReference type="EMBL" id="AC124276">
    <property type="status" value="NOT_ANNOTATED_CDS"/>
    <property type="molecule type" value="Genomic_DNA"/>
</dbReference>
<dbReference type="EMBL" id="CH471064">
    <property type="protein sequence ID" value="EAW68534.1"/>
    <property type="molecule type" value="Genomic_DNA"/>
</dbReference>
<dbReference type="EMBL" id="CH471064">
    <property type="protein sequence ID" value="EAW68535.1"/>
    <property type="molecule type" value="Genomic_DNA"/>
</dbReference>
<dbReference type="EMBL" id="CH471064">
    <property type="protein sequence ID" value="EAW68537.1"/>
    <property type="molecule type" value="Genomic_DNA"/>
</dbReference>
<dbReference type="EMBL" id="BC007660">
    <property type="protein sequence ID" value="AAH07660.1"/>
    <property type="molecule type" value="mRNA"/>
</dbReference>
<dbReference type="CCDS" id="CCDS7808.1"/>
<dbReference type="PIR" id="JC7188">
    <property type="entry name" value="JC7188"/>
</dbReference>
<dbReference type="RefSeq" id="NP_001018067.1">
    <property type="nucleotide sequence ID" value="NM_001018057.2"/>
</dbReference>
<dbReference type="RefSeq" id="NP_001317149.1">
    <property type="nucleotide sequence ID" value="NM_001330220.1"/>
</dbReference>
<dbReference type="RefSeq" id="NP_037385.2">
    <property type="nucleotide sequence ID" value="NM_013253.4"/>
</dbReference>
<dbReference type="RefSeq" id="NP_056965.3">
    <property type="nucleotide sequence ID" value="NM_015881.5"/>
</dbReference>
<dbReference type="RefSeq" id="XP_006718241.1">
    <property type="nucleotide sequence ID" value="XM_006718178.3"/>
</dbReference>
<dbReference type="RefSeq" id="XP_047282731.1">
    <property type="nucleotide sequence ID" value="XM_047426775.1"/>
</dbReference>
<dbReference type="SMR" id="Q9UBP4"/>
<dbReference type="BioGRID" id="118013">
    <property type="interactions" value="77"/>
</dbReference>
<dbReference type="FunCoup" id="Q9UBP4">
    <property type="interactions" value="335"/>
</dbReference>
<dbReference type="IntAct" id="Q9UBP4">
    <property type="interactions" value="79"/>
</dbReference>
<dbReference type="MINT" id="Q9UBP4"/>
<dbReference type="STRING" id="9606.ENSP00000433112"/>
<dbReference type="GlyConnect" id="822">
    <property type="glycosylation" value="4 N-Linked glycans (2 sites), 1 O-Linked glycan (2 sites)"/>
</dbReference>
<dbReference type="GlyCosmos" id="Q9UBP4">
    <property type="glycosylation" value="7 sites, 7 glycans"/>
</dbReference>
<dbReference type="GlyGen" id="Q9UBP4">
    <property type="glycosylation" value="9 sites, 12 N-linked glycans (3 sites), 4 O-linked glycans (4 sites)"/>
</dbReference>
<dbReference type="iPTMnet" id="Q9UBP4"/>
<dbReference type="PhosphoSitePlus" id="Q9UBP4"/>
<dbReference type="BioMuta" id="DKK3"/>
<dbReference type="DMDM" id="311033372"/>
<dbReference type="jPOST" id="Q9UBP4"/>
<dbReference type="MassIVE" id="Q9UBP4"/>
<dbReference type="PaxDb" id="9606-ENSP00000379762"/>
<dbReference type="PeptideAtlas" id="Q9UBP4"/>
<dbReference type="ProteomicsDB" id="84024"/>
<dbReference type="Pumba" id="Q9UBP4"/>
<dbReference type="Antibodypedia" id="2166">
    <property type="antibodies" value="621 antibodies from 40 providers"/>
</dbReference>
<dbReference type="DNASU" id="27122"/>
<dbReference type="Ensembl" id="ENST00000326932.8">
    <property type="protein sequence ID" value="ENSP00000314910.4"/>
    <property type="gene ID" value="ENSG00000050165.19"/>
</dbReference>
<dbReference type="Ensembl" id="ENST00000396505.7">
    <property type="protein sequence ID" value="ENSP00000379762.2"/>
    <property type="gene ID" value="ENSG00000050165.19"/>
</dbReference>
<dbReference type="Ensembl" id="ENST00000683431.1">
    <property type="protein sequence ID" value="ENSP00000506835.1"/>
    <property type="gene ID" value="ENSG00000050165.19"/>
</dbReference>
<dbReference type="GeneID" id="27122"/>
<dbReference type="KEGG" id="hsa:27122"/>
<dbReference type="MANE-Select" id="ENST00000683431.1">
    <property type="protein sequence ID" value="ENSP00000506835.1"/>
    <property type="RefSeq nucleotide sequence ID" value="NM_001018057.2"/>
    <property type="RefSeq protein sequence ID" value="NP_001018067.1"/>
</dbReference>
<dbReference type="UCSC" id="uc001mjv.4">
    <property type="organism name" value="human"/>
</dbReference>
<dbReference type="AGR" id="HGNC:2893"/>
<dbReference type="CTD" id="27122"/>
<dbReference type="DisGeNET" id="27122"/>
<dbReference type="GeneCards" id="DKK3"/>
<dbReference type="HGNC" id="HGNC:2893">
    <property type="gene designation" value="DKK3"/>
</dbReference>
<dbReference type="HPA" id="ENSG00000050165">
    <property type="expression patterns" value="Tissue enhanced (heart)"/>
</dbReference>
<dbReference type="MIM" id="605416">
    <property type="type" value="gene"/>
</dbReference>
<dbReference type="neXtProt" id="NX_Q9UBP4"/>
<dbReference type="OpenTargets" id="ENSG00000050165"/>
<dbReference type="PharmGKB" id="PA27347"/>
<dbReference type="VEuPathDB" id="HostDB:ENSG00000050165"/>
<dbReference type="eggNOG" id="KOG1218">
    <property type="taxonomic scope" value="Eukaryota"/>
</dbReference>
<dbReference type="GeneTree" id="ENSGT00390000000221"/>
<dbReference type="HOGENOM" id="CLU_055300_0_0_1"/>
<dbReference type="InParanoid" id="Q9UBP4"/>
<dbReference type="OMA" id="HCQPHGR"/>
<dbReference type="OrthoDB" id="6359792at2759"/>
<dbReference type="PAN-GO" id="Q9UBP4">
    <property type="GO annotations" value="4 GO annotations based on evolutionary models"/>
</dbReference>
<dbReference type="PhylomeDB" id="Q9UBP4"/>
<dbReference type="TreeFam" id="TF337340"/>
<dbReference type="PathwayCommons" id="Q9UBP4"/>
<dbReference type="SignaLink" id="Q9UBP4"/>
<dbReference type="SIGNOR" id="Q9UBP4"/>
<dbReference type="BioGRID-ORCS" id="27122">
    <property type="hits" value="9 hits in 1157 CRISPR screens"/>
</dbReference>
<dbReference type="ChiTaRS" id="DKK3">
    <property type="organism name" value="human"/>
</dbReference>
<dbReference type="GeneWiki" id="DKK3"/>
<dbReference type="GenomeRNAi" id="27122"/>
<dbReference type="Pharos" id="Q9UBP4">
    <property type="development level" value="Tbio"/>
</dbReference>
<dbReference type="PRO" id="PR:Q9UBP4"/>
<dbReference type="Proteomes" id="UP000005640">
    <property type="component" value="Chromosome 11"/>
</dbReference>
<dbReference type="RNAct" id="Q9UBP4">
    <property type="molecule type" value="protein"/>
</dbReference>
<dbReference type="Bgee" id="ENSG00000050165">
    <property type="expression patterns" value="Expressed in endothelial cell and 204 other cell types or tissues"/>
</dbReference>
<dbReference type="ExpressionAtlas" id="Q9UBP4">
    <property type="expression patterns" value="baseline and differential"/>
</dbReference>
<dbReference type="GO" id="GO:0005615">
    <property type="term" value="C:extracellular space"/>
    <property type="evidence" value="ECO:0000318"/>
    <property type="project" value="GO_Central"/>
</dbReference>
<dbReference type="GO" id="GO:0039706">
    <property type="term" value="F:co-receptor binding"/>
    <property type="evidence" value="ECO:0000318"/>
    <property type="project" value="GO_Central"/>
</dbReference>
<dbReference type="GO" id="GO:0048019">
    <property type="term" value="F:receptor antagonist activity"/>
    <property type="evidence" value="ECO:0000318"/>
    <property type="project" value="GO_Central"/>
</dbReference>
<dbReference type="GO" id="GO:0030325">
    <property type="term" value="P:adrenal gland development"/>
    <property type="evidence" value="ECO:0000270"/>
    <property type="project" value="UniProtKB"/>
</dbReference>
<dbReference type="GO" id="GO:0009653">
    <property type="term" value="P:anatomical structure morphogenesis"/>
    <property type="evidence" value="ECO:0000304"/>
    <property type="project" value="ProtInc"/>
</dbReference>
<dbReference type="GO" id="GO:0032348">
    <property type="term" value="P:negative regulation of aldosterone biosynthetic process"/>
    <property type="evidence" value="ECO:0000314"/>
    <property type="project" value="UniProtKB"/>
</dbReference>
<dbReference type="GO" id="GO:1902613">
    <property type="term" value="P:negative regulation of anti-Mullerian hormone signaling pathway"/>
    <property type="evidence" value="ECO:0000304"/>
    <property type="project" value="ParkinsonsUK-UCL"/>
</dbReference>
<dbReference type="GO" id="GO:0090090">
    <property type="term" value="P:negative regulation of canonical Wnt signaling pathway"/>
    <property type="evidence" value="ECO:0000314"/>
    <property type="project" value="BHF-UCL"/>
</dbReference>
<dbReference type="GO" id="GO:2000065">
    <property type="term" value="P:negative regulation of cortisol biosynthetic process"/>
    <property type="evidence" value="ECO:0000314"/>
    <property type="project" value="UniProtKB"/>
</dbReference>
<dbReference type="GO" id="GO:0045892">
    <property type="term" value="P:negative regulation of DNA-templated transcription"/>
    <property type="evidence" value="ECO:0000314"/>
    <property type="project" value="UniProtKB"/>
</dbReference>
<dbReference type="GO" id="GO:0017015">
    <property type="term" value="P:regulation of transforming growth factor beta receptor signaling pathway"/>
    <property type="evidence" value="ECO:0000303"/>
    <property type="project" value="ParkinsonsUK-UCL"/>
</dbReference>
<dbReference type="GO" id="GO:0016055">
    <property type="term" value="P:Wnt signaling pathway"/>
    <property type="evidence" value="ECO:0007669"/>
    <property type="project" value="UniProtKB-KW"/>
</dbReference>
<dbReference type="CDD" id="cd23274">
    <property type="entry name" value="Dkk3_Cys2"/>
    <property type="match status" value="1"/>
</dbReference>
<dbReference type="CDD" id="cd23014">
    <property type="entry name" value="Dkk3_N_Cys1"/>
    <property type="match status" value="1"/>
</dbReference>
<dbReference type="FunFam" id="2.10.80.10:FF:000003">
    <property type="entry name" value="Dickkopf WNT-signaling pathway inhibitor 3"/>
    <property type="match status" value="1"/>
</dbReference>
<dbReference type="Gene3D" id="2.10.80.10">
    <property type="entry name" value="Lipase, subunit A"/>
    <property type="match status" value="1"/>
</dbReference>
<dbReference type="InterPro" id="IPR006796">
    <property type="entry name" value="Dickkopf_N"/>
</dbReference>
<dbReference type="InterPro" id="IPR039863">
    <property type="entry name" value="DKK1-4"/>
</dbReference>
<dbReference type="InterPro" id="IPR047300">
    <property type="entry name" value="Dkk3_Cys2"/>
</dbReference>
<dbReference type="InterPro" id="IPR047301">
    <property type="entry name" value="Dkk3_N"/>
</dbReference>
<dbReference type="PANTHER" id="PTHR12113:SF8">
    <property type="entry name" value="DICKKOPF-RELATED PROTEIN 3"/>
    <property type="match status" value="1"/>
</dbReference>
<dbReference type="PANTHER" id="PTHR12113">
    <property type="entry name" value="DICKKOPF3-LIKE 3"/>
    <property type="match status" value="1"/>
</dbReference>
<dbReference type="Pfam" id="PF04706">
    <property type="entry name" value="Dickkopf_N"/>
    <property type="match status" value="1"/>
</dbReference>
<name>DKK3_HUMAN</name>
<accession>Q9UBP4</accession>
<accession>A8K1I2</accession>
<accession>D3DQW1</accession>
<accession>Q9ULB7</accession>
<comment type="function">
    <text evidence="1">Antagonizes canonical Wnt signaling by inhibiting LRP5/6 interaction with Wnt and by forming a ternary complex with the transmembrane protein KREMEN that promotes internalization of LRP5/6. DKKs play an important role in vertebrate development, where they locally inhibit Wnt regulated processes such as antero-posterior axial patterning, limb development, somitogenesis and eye formation. In the adult, Dkks are implicated in bone formation and bone disease, cancer and Alzheimer disease (By similarity).</text>
</comment>
<comment type="subunit">
    <text evidence="1">Interacts with LRP5 and LRP6.</text>
</comment>
<comment type="interaction">
    <interactant intactId="EBI-954409">
        <id>Q9UBP4</id>
    </interactant>
    <interactant intactId="EBI-10988864">
        <id>P46379-2</id>
        <label>BAG6</label>
    </interactant>
    <organismsDiffer>false</organismsDiffer>
    <experiments>3</experiments>
</comment>
<comment type="interaction">
    <interactant intactId="EBI-954409">
        <id>Q9UBP4</id>
    </interactant>
    <interactant intactId="EBI-12593112">
        <id>O75190-2</id>
        <label>DNAJB6</label>
    </interactant>
    <organismsDiffer>false</organismsDiffer>
    <experiments>3</experiments>
</comment>
<comment type="interaction">
    <interactant intactId="EBI-954409">
        <id>Q9UBP4</id>
    </interactant>
    <interactant intactId="EBI-948266">
        <id>O14901</id>
        <label>KLF11</label>
    </interactant>
    <organismsDiffer>false</organismsDiffer>
    <experiments>3</experiments>
</comment>
<comment type="interaction">
    <interactant intactId="EBI-954409">
        <id>Q9UBP4</id>
    </interactant>
    <interactant intactId="EBI-347996">
        <id>O43765</id>
        <label>SGTA</label>
    </interactant>
    <organismsDiffer>false</organismsDiffer>
    <experiments>3</experiments>
</comment>
<comment type="subcellular location">
    <subcellularLocation>
        <location>Secreted</location>
    </subcellularLocation>
</comment>
<comment type="tissue specificity">
    <text evidence="3 12">Highest expression in heart, brain, and spinal cord.</text>
</comment>
<comment type="domain">
    <text evidence="1">The C-terminal cysteine-rich domain mediates interaction with LRP5 and LRP6.</text>
</comment>
<comment type="PTM">
    <text evidence="3 10 11">N- and O-glycosylated.</text>
</comment>
<comment type="similarity">
    <text evidence="14">Belongs to the dickkopf family.</text>
</comment>
<protein>
    <recommendedName>
        <fullName>Dickkopf-related protein 3</fullName>
        <shortName>Dickkopf-3</shortName>
        <shortName>Dkk-3</shortName>
        <shortName>hDkk-3</shortName>
    </recommendedName>
</protein>
<gene>
    <name type="primary">DKK3</name>
    <name type="synonym">REIC</name>
    <name type="ORF">UNQ258/PRO295</name>
</gene>
<keyword id="KW-0175">Coiled coil</keyword>
<keyword id="KW-0217">Developmental protein</keyword>
<keyword id="KW-0903">Direct protein sequencing</keyword>
<keyword id="KW-1015">Disulfide bond</keyword>
<keyword id="KW-0325">Glycoprotein</keyword>
<keyword id="KW-1267">Proteomics identification</keyword>
<keyword id="KW-1185">Reference proteome</keyword>
<keyword id="KW-0964">Secreted</keyword>
<keyword id="KW-0732">Signal</keyword>
<keyword id="KW-0879">Wnt signaling pathway</keyword>
<sequence length="350" mass="38390">MQRLGATLLCLLLAAAVPTAPAPAPTATSAPVKPGPALSYPQEEATLNEMFREVEELMEDTQHKLRSAVEEMEAEEAAAKASSEVNLANLPPSYHNETNTDTKVGNNTIHVHREIHKITNNQTGQMVFSETVITSVGDEEGRRSHECIIDEDCGPSMYCQFASFQYTCQPCRGQRMLCTRDSECCGDQLCVWGHCTKMATRGSNGTICDNQRDCQPGLCCAFQRGLLFPVCTPLPVEGELCHDPASRLLDLITWELEPDGALDRCPCASGLLCQPHSHSLVYVCKPTFVGSRDQDGEILLPREVPDEYEVGSFMEEVRQELEDLERSLTEEMALREPAAAAAALLGGEEI</sequence>
<organism>
    <name type="scientific">Homo sapiens</name>
    <name type="common">Human</name>
    <dbReference type="NCBI Taxonomy" id="9606"/>
    <lineage>
        <taxon>Eukaryota</taxon>
        <taxon>Metazoa</taxon>
        <taxon>Chordata</taxon>
        <taxon>Craniata</taxon>
        <taxon>Vertebrata</taxon>
        <taxon>Euteleostomi</taxon>
        <taxon>Mammalia</taxon>
        <taxon>Eutheria</taxon>
        <taxon>Euarchontoglires</taxon>
        <taxon>Primates</taxon>
        <taxon>Haplorrhini</taxon>
        <taxon>Catarrhini</taxon>
        <taxon>Hominidae</taxon>
        <taxon>Homo</taxon>
    </lineage>
</organism>
<feature type="signal peptide" evidence="8 10">
    <location>
        <begin position="1"/>
        <end position="21"/>
    </location>
</feature>
<feature type="chain" id="PRO_0000007222" description="Dickkopf-related protein 3">
    <location>
        <begin position="22"/>
        <end position="350"/>
    </location>
</feature>
<feature type="region of interest" description="O-glycosylated at one site">
    <location>
        <begin position="29"/>
        <end position="46"/>
    </location>
</feature>
<feature type="region of interest" description="DKK-type Cys-1">
    <location>
        <begin position="147"/>
        <end position="195"/>
    </location>
</feature>
<feature type="region of interest" description="DKK-type Cys-2">
    <location>
        <begin position="208"/>
        <end position="284"/>
    </location>
</feature>
<feature type="coiled-coil region" evidence="2">
    <location>
        <begin position="40"/>
        <end position="84"/>
    </location>
</feature>
<feature type="glycosylation site" description="O-linked (GalNAc...) threonine" evidence="11">
    <location>
        <position position="26"/>
    </location>
</feature>
<feature type="glycosylation site" description="O-linked (GalNAc...) threonine" evidence="11">
    <location>
        <position position="28"/>
    </location>
</feature>
<feature type="glycosylation site" description="N-linked (GlcNAc...) asparagine" evidence="2">
    <location>
        <position position="96"/>
    </location>
</feature>
<feature type="glycosylation site" description="N-linked (GlcNAc...) asparagine" evidence="2">
    <location>
        <position position="106"/>
    </location>
</feature>
<feature type="glycosylation site" description="N-linked (GlcNAc...) asparagine" evidence="2">
    <location>
        <position position="121"/>
    </location>
</feature>
<feature type="glycosylation site" description="N-linked (GlcNAc...) asparagine" evidence="2">
    <location>
        <position position="204"/>
    </location>
</feature>
<feature type="disulfide bond" evidence="1">
    <location>
        <begin position="208"/>
        <end position="220"/>
    </location>
</feature>
<feature type="disulfide bond" evidence="1">
    <location>
        <begin position="214"/>
        <end position="231"/>
    </location>
</feature>
<feature type="disulfide bond" evidence="1">
    <location>
        <begin position="219"/>
        <end position="265"/>
    </location>
</feature>
<feature type="disulfide bond" evidence="1">
    <location>
        <begin position="241"/>
        <end position="273"/>
    </location>
</feature>
<feature type="sequence variant" id="VAR_057516" description="In dbSNP:rs11544816.">
    <original>E</original>
    <variation>D</variation>
    <location>
        <position position="49"/>
    </location>
</feature>
<feature type="sequence variant" id="VAR_030787" description="In dbSNP:rs3206824." evidence="3 4 5 6 7 9 12 13">
    <original>R</original>
    <variation>G</variation>
    <location>
        <position position="335"/>
    </location>
</feature>
<reference key="1">
    <citation type="journal article" date="1999" name="Gene">
        <title>Functional and structural diversity of the human Dickkopf gene family.</title>
        <authorList>
            <person name="Krupnik V.E."/>
            <person name="Sharp J.D."/>
            <person name="Jiang C."/>
            <person name="Robison K."/>
            <person name="Chickering T.W."/>
            <person name="Amaravadi L."/>
            <person name="Brown D.E."/>
            <person name="Guyot D."/>
            <person name="Mays G."/>
            <person name="Leiby K."/>
            <person name="Chang B."/>
            <person name="Duong T."/>
            <person name="Goodearl A.D.J."/>
            <person name="Gearing D.P."/>
            <person name="Sokol S.Y."/>
            <person name="McCarthy S.A."/>
        </authorList>
    </citation>
    <scope>NUCLEOTIDE SEQUENCE [MRNA]</scope>
    <scope>TISSUE SPECIFICITY</scope>
    <scope>POSSIBLE FUNCTION</scope>
    <scope>GLYCOSYLATION</scope>
    <scope>VARIANT GLY-335</scope>
    <source>
        <tissue>Fetal brain</tissue>
    </source>
</reference>
<reference key="2">
    <citation type="journal article" date="2000" name="Biochem. Biophys. Res. Commun.">
        <title>A REIC gene shows down-regulation in human immortalized cells and human tumor-derived cell lines.</title>
        <authorList>
            <person name="Tsuji T."/>
            <person name="Miyazaki M."/>
            <person name="Sakaguchi M."/>
            <person name="Inoue Y."/>
            <person name="Namba M."/>
        </authorList>
    </citation>
    <scope>NUCLEOTIDE SEQUENCE [MRNA]</scope>
    <scope>VARIANT GLY-335</scope>
</reference>
<reference key="3">
    <citation type="journal article" date="2002" name="Gene">
        <title>Reduced expression of the REIC/Dkk-3 gene by promoter-hypermethylation in human tumor cells.</title>
        <authorList>
            <person name="Kobayashi K."/>
            <person name="Ouchida M."/>
            <person name="Tsuji T."/>
            <person name="Hanafusa H."/>
            <person name="Miyazaki M."/>
            <person name="Namba M."/>
            <person name="Shimizu N."/>
            <person name="Shimizu K."/>
        </authorList>
    </citation>
    <scope>NUCLEOTIDE SEQUENCE [GENOMIC DNA / MRNA]</scope>
    <scope>VARIANT GLY-335</scope>
</reference>
<reference key="4">
    <citation type="submission" date="1999-10" db="EMBL/GenBank/DDBJ databases">
        <title>Human homologue of Dickkopf-3.</title>
        <authorList>
            <person name="Tanaka S."/>
            <person name="Sugimachi K."/>
            <person name="Sugimachi K."/>
        </authorList>
    </citation>
    <scope>NUCLEOTIDE SEQUENCE [MRNA]</scope>
    <scope>TISSUE SPECIFICITY</scope>
    <scope>VARIANT GLY-335</scope>
</reference>
<reference key="5">
    <citation type="submission" date="1999-11" db="EMBL/GenBank/DDBJ databases">
        <title>Human Dickkopf-3, genomic sequence.</title>
        <authorList>
            <person name="Tate G."/>
            <person name="Mitsuya T."/>
        </authorList>
    </citation>
    <scope>NUCLEOTIDE SEQUENCE [GENOMIC DNA]</scope>
</reference>
<reference key="6">
    <citation type="journal article" date="2003" name="Genome Res.">
        <title>The secreted protein discovery initiative (SPDI), a large-scale effort to identify novel human secreted and transmembrane proteins: a bioinformatics assessment.</title>
        <authorList>
            <person name="Clark H.F."/>
            <person name="Gurney A.L."/>
            <person name="Abaya E."/>
            <person name="Baker K."/>
            <person name="Baldwin D.T."/>
            <person name="Brush J."/>
            <person name="Chen J."/>
            <person name="Chow B."/>
            <person name="Chui C."/>
            <person name="Crowley C."/>
            <person name="Currell B."/>
            <person name="Deuel B."/>
            <person name="Dowd P."/>
            <person name="Eaton D."/>
            <person name="Foster J.S."/>
            <person name="Grimaldi C."/>
            <person name="Gu Q."/>
            <person name="Hass P.E."/>
            <person name="Heldens S."/>
            <person name="Huang A."/>
            <person name="Kim H.S."/>
            <person name="Klimowski L."/>
            <person name="Jin Y."/>
            <person name="Johnson S."/>
            <person name="Lee J."/>
            <person name="Lewis L."/>
            <person name="Liao D."/>
            <person name="Mark M.R."/>
            <person name="Robbie E."/>
            <person name="Sanchez C."/>
            <person name="Schoenfeld J."/>
            <person name="Seshagiri S."/>
            <person name="Simmons L."/>
            <person name="Singh J."/>
            <person name="Smith V."/>
            <person name="Stinson J."/>
            <person name="Vagts A."/>
            <person name="Vandlen R.L."/>
            <person name="Watanabe C."/>
            <person name="Wieand D."/>
            <person name="Woods K."/>
            <person name="Xie M.-H."/>
            <person name="Yansura D.G."/>
            <person name="Yi S."/>
            <person name="Yu G."/>
            <person name="Yuan J."/>
            <person name="Zhang M."/>
            <person name="Zhang Z."/>
            <person name="Goddard A.D."/>
            <person name="Wood W.I."/>
            <person name="Godowski P.J."/>
            <person name="Gray A.M."/>
        </authorList>
    </citation>
    <scope>NUCLEOTIDE SEQUENCE [LARGE SCALE MRNA]</scope>
    <scope>VARIANT GLY-335</scope>
</reference>
<reference key="7">
    <citation type="journal article" date="2004" name="Nat. Genet.">
        <title>Complete sequencing and characterization of 21,243 full-length human cDNAs.</title>
        <authorList>
            <person name="Ota T."/>
            <person name="Suzuki Y."/>
            <person name="Nishikawa T."/>
            <person name="Otsuki T."/>
            <person name="Sugiyama T."/>
            <person name="Irie R."/>
            <person name="Wakamatsu A."/>
            <person name="Hayashi K."/>
            <person name="Sato H."/>
            <person name="Nagai K."/>
            <person name="Kimura K."/>
            <person name="Makita H."/>
            <person name="Sekine M."/>
            <person name="Obayashi M."/>
            <person name="Nishi T."/>
            <person name="Shibahara T."/>
            <person name="Tanaka T."/>
            <person name="Ishii S."/>
            <person name="Yamamoto J."/>
            <person name="Saito K."/>
            <person name="Kawai Y."/>
            <person name="Isono Y."/>
            <person name="Nakamura Y."/>
            <person name="Nagahari K."/>
            <person name="Murakami K."/>
            <person name="Yasuda T."/>
            <person name="Iwayanagi T."/>
            <person name="Wagatsuma M."/>
            <person name="Shiratori A."/>
            <person name="Sudo H."/>
            <person name="Hosoiri T."/>
            <person name="Kaku Y."/>
            <person name="Kodaira H."/>
            <person name="Kondo H."/>
            <person name="Sugawara M."/>
            <person name="Takahashi M."/>
            <person name="Kanda K."/>
            <person name="Yokoi T."/>
            <person name="Furuya T."/>
            <person name="Kikkawa E."/>
            <person name="Omura Y."/>
            <person name="Abe K."/>
            <person name="Kamihara K."/>
            <person name="Katsuta N."/>
            <person name="Sato K."/>
            <person name="Tanikawa M."/>
            <person name="Yamazaki M."/>
            <person name="Ninomiya K."/>
            <person name="Ishibashi T."/>
            <person name="Yamashita H."/>
            <person name="Murakawa K."/>
            <person name="Fujimori K."/>
            <person name="Tanai H."/>
            <person name="Kimata M."/>
            <person name="Watanabe M."/>
            <person name="Hiraoka S."/>
            <person name="Chiba Y."/>
            <person name="Ishida S."/>
            <person name="Ono Y."/>
            <person name="Takiguchi S."/>
            <person name="Watanabe S."/>
            <person name="Yosida M."/>
            <person name="Hotuta T."/>
            <person name="Kusano J."/>
            <person name="Kanehori K."/>
            <person name="Takahashi-Fujii A."/>
            <person name="Hara H."/>
            <person name="Tanase T.-O."/>
            <person name="Nomura Y."/>
            <person name="Togiya S."/>
            <person name="Komai F."/>
            <person name="Hara R."/>
            <person name="Takeuchi K."/>
            <person name="Arita M."/>
            <person name="Imose N."/>
            <person name="Musashino K."/>
            <person name="Yuuki H."/>
            <person name="Oshima A."/>
            <person name="Sasaki N."/>
            <person name="Aotsuka S."/>
            <person name="Yoshikawa Y."/>
            <person name="Matsunawa H."/>
            <person name="Ichihara T."/>
            <person name="Shiohata N."/>
            <person name="Sano S."/>
            <person name="Moriya S."/>
            <person name="Momiyama H."/>
            <person name="Satoh N."/>
            <person name="Takami S."/>
            <person name="Terashima Y."/>
            <person name="Suzuki O."/>
            <person name="Nakagawa S."/>
            <person name="Senoh A."/>
            <person name="Mizoguchi H."/>
            <person name="Goto Y."/>
            <person name="Shimizu F."/>
            <person name="Wakebe H."/>
            <person name="Hishigaki H."/>
            <person name="Watanabe T."/>
            <person name="Sugiyama A."/>
            <person name="Takemoto M."/>
            <person name="Kawakami B."/>
            <person name="Yamazaki M."/>
            <person name="Watanabe K."/>
            <person name="Kumagai A."/>
            <person name="Itakura S."/>
            <person name="Fukuzumi Y."/>
            <person name="Fujimori Y."/>
            <person name="Komiyama M."/>
            <person name="Tashiro H."/>
            <person name="Tanigami A."/>
            <person name="Fujiwara T."/>
            <person name="Ono T."/>
            <person name="Yamada K."/>
            <person name="Fujii Y."/>
            <person name="Ozaki K."/>
            <person name="Hirao M."/>
            <person name="Ohmori Y."/>
            <person name="Kawabata A."/>
            <person name="Hikiji T."/>
            <person name="Kobatake N."/>
            <person name="Inagaki H."/>
            <person name="Ikema Y."/>
            <person name="Okamoto S."/>
            <person name="Okitani R."/>
            <person name="Kawakami T."/>
            <person name="Noguchi S."/>
            <person name="Itoh T."/>
            <person name="Shigeta K."/>
            <person name="Senba T."/>
            <person name="Matsumura K."/>
            <person name="Nakajima Y."/>
            <person name="Mizuno T."/>
            <person name="Morinaga M."/>
            <person name="Sasaki M."/>
            <person name="Togashi T."/>
            <person name="Oyama M."/>
            <person name="Hata H."/>
            <person name="Watanabe M."/>
            <person name="Komatsu T."/>
            <person name="Mizushima-Sugano J."/>
            <person name="Satoh T."/>
            <person name="Shirai Y."/>
            <person name="Takahashi Y."/>
            <person name="Nakagawa K."/>
            <person name="Okumura K."/>
            <person name="Nagase T."/>
            <person name="Nomura N."/>
            <person name="Kikuchi H."/>
            <person name="Masuho Y."/>
            <person name="Yamashita R."/>
            <person name="Nakai K."/>
            <person name="Yada T."/>
            <person name="Nakamura Y."/>
            <person name="Ohara O."/>
            <person name="Isogai T."/>
            <person name="Sugano S."/>
        </authorList>
    </citation>
    <scope>NUCLEOTIDE SEQUENCE [LARGE SCALE MRNA]</scope>
    <scope>VARIANT GLY-335</scope>
    <source>
        <tissue>Corpus callosum</tissue>
    </source>
</reference>
<reference key="8">
    <citation type="journal article" date="2006" name="Nature">
        <title>Human chromosome 11 DNA sequence and analysis including novel gene identification.</title>
        <authorList>
            <person name="Taylor T.D."/>
            <person name="Noguchi H."/>
            <person name="Totoki Y."/>
            <person name="Toyoda A."/>
            <person name="Kuroki Y."/>
            <person name="Dewar K."/>
            <person name="Lloyd C."/>
            <person name="Itoh T."/>
            <person name="Takeda T."/>
            <person name="Kim D.-W."/>
            <person name="She X."/>
            <person name="Barlow K.F."/>
            <person name="Bloom T."/>
            <person name="Bruford E."/>
            <person name="Chang J.L."/>
            <person name="Cuomo C.A."/>
            <person name="Eichler E."/>
            <person name="FitzGerald M.G."/>
            <person name="Jaffe D.B."/>
            <person name="LaButti K."/>
            <person name="Nicol R."/>
            <person name="Park H.-S."/>
            <person name="Seaman C."/>
            <person name="Sougnez C."/>
            <person name="Yang X."/>
            <person name="Zimmer A.R."/>
            <person name="Zody M.C."/>
            <person name="Birren B.W."/>
            <person name="Nusbaum C."/>
            <person name="Fujiyama A."/>
            <person name="Hattori M."/>
            <person name="Rogers J."/>
            <person name="Lander E.S."/>
            <person name="Sakaki Y."/>
        </authorList>
    </citation>
    <scope>NUCLEOTIDE SEQUENCE [LARGE SCALE GENOMIC DNA]</scope>
</reference>
<reference key="9">
    <citation type="submission" date="2005-09" db="EMBL/GenBank/DDBJ databases">
        <authorList>
            <person name="Mural R.J."/>
            <person name="Istrail S."/>
            <person name="Sutton G.G."/>
            <person name="Florea L."/>
            <person name="Halpern A.L."/>
            <person name="Mobarry C.M."/>
            <person name="Lippert R."/>
            <person name="Walenz B."/>
            <person name="Shatkay H."/>
            <person name="Dew I."/>
            <person name="Miller J.R."/>
            <person name="Flanigan M.J."/>
            <person name="Edwards N.J."/>
            <person name="Bolanos R."/>
            <person name="Fasulo D."/>
            <person name="Halldorsson B.V."/>
            <person name="Hannenhalli S."/>
            <person name="Turner R."/>
            <person name="Yooseph S."/>
            <person name="Lu F."/>
            <person name="Nusskern D.R."/>
            <person name="Shue B.C."/>
            <person name="Zheng X.H."/>
            <person name="Zhong F."/>
            <person name="Delcher A.L."/>
            <person name="Huson D.H."/>
            <person name="Kravitz S.A."/>
            <person name="Mouchard L."/>
            <person name="Reinert K."/>
            <person name="Remington K.A."/>
            <person name="Clark A.G."/>
            <person name="Waterman M.S."/>
            <person name="Eichler E.E."/>
            <person name="Adams M.D."/>
            <person name="Hunkapiller M.W."/>
            <person name="Myers E.W."/>
            <person name="Venter J.C."/>
        </authorList>
    </citation>
    <scope>NUCLEOTIDE SEQUENCE [LARGE SCALE GENOMIC DNA]</scope>
    <scope>VARIANT GLY-335</scope>
</reference>
<reference key="10">
    <citation type="journal article" date="2004" name="Genome Res.">
        <title>The status, quality, and expansion of the NIH full-length cDNA project: the Mammalian Gene Collection (MGC).</title>
        <authorList>
            <consortium name="The MGC Project Team"/>
        </authorList>
    </citation>
    <scope>NUCLEOTIDE SEQUENCE [LARGE SCALE MRNA]</scope>
    <scope>VARIANT GLY-335</scope>
    <source>
        <tissue>Kidney</tissue>
    </source>
</reference>
<reference key="11">
    <citation type="journal article" date="2004" name="Protein Sci.">
        <title>Signal peptide prediction based on analysis of experimentally verified cleavage sites.</title>
        <authorList>
            <person name="Zhang Z."/>
            <person name="Henzel W.J."/>
        </authorList>
    </citation>
    <scope>PROTEIN SEQUENCE OF 22-36</scope>
</reference>
<reference key="12">
    <citation type="journal article" date="2006" name="Oncogene">
        <title>Function and biological roles of the Dickkopf family of Wnt modulators.</title>
        <authorList>
            <person name="Niehrs C."/>
        </authorList>
    </citation>
    <scope>REVIEW OF THE DKK FAMILY</scope>
</reference>
<reference key="13">
    <citation type="journal article" date="2009" name="Nat. Methods">
        <title>Enrichment of glycopeptides for glycan structure and attachment site identification.</title>
        <authorList>
            <person name="Nilsson J."/>
            <person name="Rueetschi U."/>
            <person name="Halim A."/>
            <person name="Hesse C."/>
            <person name="Carlsohn E."/>
            <person name="Brinkmalm G."/>
            <person name="Larson G."/>
        </authorList>
    </citation>
    <scope>GLYCOSYLATION [LARGE SCALE ANALYSIS]</scope>
    <scope>SIGNAL SEQUENCE CLEAVAGE SITE</scope>
    <scope>STRUCTURE OF CARBOHYDRATES</scope>
    <source>
        <tissue>Cerebrospinal fluid</tissue>
    </source>
</reference>
<reference key="14">
    <citation type="journal article" date="2013" name="J. Proteome Res.">
        <title>LC-MS/MS characterization of O-glycosylation sites and glycan structures of human cerebrospinal fluid glycoproteins.</title>
        <authorList>
            <person name="Halim A."/>
            <person name="Ruetschi U."/>
            <person name="Larson G."/>
            <person name="Nilsson J."/>
        </authorList>
    </citation>
    <scope>GLYCOSYLATION AT THR-26 AND THR-28</scope>
    <scope>IDENTIFICATION BY MASS SPECTROMETRY</scope>
</reference>
<evidence type="ECO:0000250" key="1"/>
<evidence type="ECO:0000255" key="2"/>
<evidence type="ECO:0000269" key="3">
    <source>
    </source>
</evidence>
<evidence type="ECO:0000269" key="4">
    <source>
    </source>
</evidence>
<evidence type="ECO:0000269" key="5">
    <source>
    </source>
</evidence>
<evidence type="ECO:0000269" key="6">
    <source>
    </source>
</evidence>
<evidence type="ECO:0000269" key="7">
    <source>
    </source>
</evidence>
<evidence type="ECO:0000269" key="8">
    <source>
    </source>
</evidence>
<evidence type="ECO:0000269" key="9">
    <source>
    </source>
</evidence>
<evidence type="ECO:0000269" key="10">
    <source>
    </source>
</evidence>
<evidence type="ECO:0000269" key="11">
    <source>
    </source>
</evidence>
<evidence type="ECO:0000269" key="12">
    <source ref="4"/>
</evidence>
<evidence type="ECO:0000269" key="13">
    <source ref="9"/>
</evidence>
<evidence type="ECO:0000305" key="14"/>
<proteinExistence type="evidence at protein level"/>